<organism>
    <name type="scientific">Methylibium petroleiphilum (strain ATCC BAA-1232 / LMG 22953 / PM1)</name>
    <dbReference type="NCBI Taxonomy" id="420662"/>
    <lineage>
        <taxon>Bacteria</taxon>
        <taxon>Pseudomonadati</taxon>
        <taxon>Pseudomonadota</taxon>
        <taxon>Betaproteobacteria</taxon>
        <taxon>Burkholderiales</taxon>
        <taxon>Sphaerotilaceae</taxon>
        <taxon>Methylibium</taxon>
    </lineage>
</organism>
<proteinExistence type="inferred from homology"/>
<keyword id="KW-0028">Amino-acid biosynthesis</keyword>
<keyword id="KW-0963">Cytoplasm</keyword>
<keyword id="KW-0368">Histidine biosynthesis</keyword>
<keyword id="KW-0378">Hydrolase</keyword>
<keyword id="KW-0460">Magnesium</keyword>
<keyword id="KW-0479">Metal-binding</keyword>
<keyword id="KW-1185">Reference proteome</keyword>
<keyword id="KW-0862">Zinc</keyword>
<sequence>MTWLDDIRWDRDGLLPVIAQEAATGDVLMFAWMNREALARTAELGEAVYWSRSRGRLWHKGEESGHIQKVRDMRLDCDNDVLLLKVEQLGHEPSIACHTGRHSCFYQRYESGAWHAVELVLKDPEHIYR</sequence>
<gene>
    <name evidence="1" type="primary">hisI</name>
    <name type="ordered locus">Mpe_A0837</name>
</gene>
<feature type="chain" id="PRO_0000319699" description="Phosphoribosyl-AMP cyclohydrolase">
    <location>
        <begin position="1"/>
        <end position="129"/>
    </location>
</feature>
<feature type="binding site" evidence="1">
    <location>
        <position position="76"/>
    </location>
    <ligand>
        <name>Mg(2+)</name>
        <dbReference type="ChEBI" id="CHEBI:18420"/>
    </ligand>
</feature>
<feature type="binding site" evidence="1">
    <location>
        <position position="77"/>
    </location>
    <ligand>
        <name>Zn(2+)</name>
        <dbReference type="ChEBI" id="CHEBI:29105"/>
        <note>ligand shared between dimeric partners</note>
    </ligand>
</feature>
<feature type="binding site" evidence="1">
    <location>
        <position position="78"/>
    </location>
    <ligand>
        <name>Mg(2+)</name>
        <dbReference type="ChEBI" id="CHEBI:18420"/>
    </ligand>
</feature>
<feature type="binding site" evidence="1">
    <location>
        <position position="80"/>
    </location>
    <ligand>
        <name>Mg(2+)</name>
        <dbReference type="ChEBI" id="CHEBI:18420"/>
    </ligand>
</feature>
<feature type="binding site" evidence="1">
    <location>
        <position position="97"/>
    </location>
    <ligand>
        <name>Zn(2+)</name>
        <dbReference type="ChEBI" id="CHEBI:29105"/>
        <note>ligand shared between dimeric partners</note>
    </ligand>
</feature>
<feature type="binding site" evidence="1">
    <location>
        <position position="104"/>
    </location>
    <ligand>
        <name>Zn(2+)</name>
        <dbReference type="ChEBI" id="CHEBI:29105"/>
        <note>ligand shared between dimeric partners</note>
    </ligand>
</feature>
<protein>
    <recommendedName>
        <fullName evidence="1">Phosphoribosyl-AMP cyclohydrolase</fullName>
        <shortName evidence="1">PRA-CH</shortName>
        <ecNumber evidence="1">3.5.4.19</ecNumber>
    </recommendedName>
</protein>
<name>HIS3_METPP</name>
<evidence type="ECO:0000255" key="1">
    <source>
        <dbReference type="HAMAP-Rule" id="MF_01021"/>
    </source>
</evidence>
<comment type="function">
    <text evidence="1">Catalyzes the hydrolysis of the adenine ring of phosphoribosyl-AMP.</text>
</comment>
<comment type="catalytic activity">
    <reaction evidence="1">
        <text>1-(5-phospho-beta-D-ribosyl)-5'-AMP + H2O = 1-(5-phospho-beta-D-ribosyl)-5-[(5-phospho-beta-D-ribosylamino)methylideneamino]imidazole-4-carboxamide</text>
        <dbReference type="Rhea" id="RHEA:20049"/>
        <dbReference type="ChEBI" id="CHEBI:15377"/>
        <dbReference type="ChEBI" id="CHEBI:58435"/>
        <dbReference type="ChEBI" id="CHEBI:59457"/>
        <dbReference type="EC" id="3.5.4.19"/>
    </reaction>
</comment>
<comment type="cofactor">
    <cofactor evidence="1">
        <name>Mg(2+)</name>
        <dbReference type="ChEBI" id="CHEBI:18420"/>
    </cofactor>
    <text evidence="1">Binds 1 Mg(2+) ion per subunit.</text>
</comment>
<comment type="cofactor">
    <cofactor evidence="1">
        <name>Zn(2+)</name>
        <dbReference type="ChEBI" id="CHEBI:29105"/>
    </cofactor>
    <text evidence="1">Binds 1 zinc ion per subunit.</text>
</comment>
<comment type="pathway">
    <text evidence="1">Amino-acid biosynthesis; L-histidine biosynthesis; L-histidine from 5-phospho-alpha-D-ribose 1-diphosphate: step 3/9.</text>
</comment>
<comment type="subunit">
    <text evidence="1">Homodimer.</text>
</comment>
<comment type="subcellular location">
    <subcellularLocation>
        <location evidence="1">Cytoplasm</location>
    </subcellularLocation>
</comment>
<comment type="similarity">
    <text evidence="1">Belongs to the PRA-CH family.</text>
</comment>
<reference key="1">
    <citation type="journal article" date="2007" name="J. Bacteriol.">
        <title>Whole-genome analysis of the methyl tert-butyl ether-degrading beta-proteobacterium Methylibium petroleiphilum PM1.</title>
        <authorList>
            <person name="Kane S.R."/>
            <person name="Chakicherla A.Y."/>
            <person name="Chain P.S.G."/>
            <person name="Schmidt R."/>
            <person name="Shin M.W."/>
            <person name="Legler T.C."/>
            <person name="Scow K.M."/>
            <person name="Larimer F.W."/>
            <person name="Lucas S.M."/>
            <person name="Richardson P.M."/>
            <person name="Hristova K.R."/>
        </authorList>
    </citation>
    <scope>NUCLEOTIDE SEQUENCE [LARGE SCALE GENOMIC DNA]</scope>
    <source>
        <strain>ATCC BAA-1232 / LMG 22953 / PM1</strain>
    </source>
</reference>
<dbReference type="EC" id="3.5.4.19" evidence="1"/>
<dbReference type="EMBL" id="CP000555">
    <property type="protein sequence ID" value="ABM93799.1"/>
    <property type="molecule type" value="Genomic_DNA"/>
</dbReference>
<dbReference type="RefSeq" id="WP_011828437.1">
    <property type="nucleotide sequence ID" value="NC_008825.1"/>
</dbReference>
<dbReference type="SMR" id="A2SE10"/>
<dbReference type="STRING" id="420662.Mpe_A0837"/>
<dbReference type="KEGG" id="mpt:Mpe_A0837"/>
<dbReference type="eggNOG" id="COG0139">
    <property type="taxonomic scope" value="Bacteria"/>
</dbReference>
<dbReference type="HOGENOM" id="CLU_048577_5_0_4"/>
<dbReference type="UniPathway" id="UPA00031">
    <property type="reaction ID" value="UER00008"/>
</dbReference>
<dbReference type="Proteomes" id="UP000000366">
    <property type="component" value="Chromosome"/>
</dbReference>
<dbReference type="GO" id="GO:0005737">
    <property type="term" value="C:cytoplasm"/>
    <property type="evidence" value="ECO:0007669"/>
    <property type="project" value="UniProtKB-SubCell"/>
</dbReference>
<dbReference type="GO" id="GO:0000287">
    <property type="term" value="F:magnesium ion binding"/>
    <property type="evidence" value="ECO:0007669"/>
    <property type="project" value="UniProtKB-UniRule"/>
</dbReference>
<dbReference type="GO" id="GO:0004635">
    <property type="term" value="F:phosphoribosyl-AMP cyclohydrolase activity"/>
    <property type="evidence" value="ECO:0007669"/>
    <property type="project" value="UniProtKB-UniRule"/>
</dbReference>
<dbReference type="GO" id="GO:0008270">
    <property type="term" value="F:zinc ion binding"/>
    <property type="evidence" value="ECO:0007669"/>
    <property type="project" value="UniProtKB-UniRule"/>
</dbReference>
<dbReference type="GO" id="GO:0000105">
    <property type="term" value="P:L-histidine biosynthetic process"/>
    <property type="evidence" value="ECO:0007669"/>
    <property type="project" value="UniProtKB-UniRule"/>
</dbReference>
<dbReference type="FunFam" id="3.10.20.810:FF:000001">
    <property type="entry name" value="Histidine biosynthesis bifunctional protein HisIE"/>
    <property type="match status" value="1"/>
</dbReference>
<dbReference type="Gene3D" id="3.10.20.810">
    <property type="entry name" value="Phosphoribosyl-AMP cyclohydrolase"/>
    <property type="match status" value="1"/>
</dbReference>
<dbReference type="HAMAP" id="MF_01021">
    <property type="entry name" value="HisI"/>
    <property type="match status" value="1"/>
</dbReference>
<dbReference type="InterPro" id="IPR026660">
    <property type="entry name" value="PRA-CH"/>
</dbReference>
<dbReference type="InterPro" id="IPR002496">
    <property type="entry name" value="PRib_AMP_CycHydrolase_dom"/>
</dbReference>
<dbReference type="InterPro" id="IPR038019">
    <property type="entry name" value="PRib_AMP_CycHydrolase_sf"/>
</dbReference>
<dbReference type="NCBIfam" id="NF000768">
    <property type="entry name" value="PRK00051.1"/>
    <property type="match status" value="1"/>
</dbReference>
<dbReference type="PANTHER" id="PTHR42945">
    <property type="entry name" value="HISTIDINE BIOSYNTHESIS BIFUNCTIONAL PROTEIN"/>
    <property type="match status" value="1"/>
</dbReference>
<dbReference type="PANTHER" id="PTHR42945:SF1">
    <property type="entry name" value="HISTIDINE BIOSYNTHESIS BIFUNCTIONAL PROTEIN HIS7"/>
    <property type="match status" value="1"/>
</dbReference>
<dbReference type="Pfam" id="PF01502">
    <property type="entry name" value="PRA-CH"/>
    <property type="match status" value="1"/>
</dbReference>
<dbReference type="SUPFAM" id="SSF141734">
    <property type="entry name" value="HisI-like"/>
    <property type="match status" value="1"/>
</dbReference>
<accession>A2SE10</accession>